<keyword id="KW-0687">Ribonucleoprotein</keyword>
<keyword id="KW-0689">Ribosomal protein</keyword>
<keyword id="KW-0694">RNA-binding</keyword>
<keyword id="KW-0699">rRNA-binding</keyword>
<dbReference type="EMBL" id="CP000713">
    <property type="protein sequence ID" value="ABQ93385.1"/>
    <property type="molecule type" value="Genomic_DNA"/>
</dbReference>
<dbReference type="SMR" id="A5WCJ4"/>
<dbReference type="STRING" id="349106.PsycPRwf_0430"/>
<dbReference type="KEGG" id="prw:PsycPRwf_0430"/>
<dbReference type="eggNOG" id="COG0185">
    <property type="taxonomic scope" value="Bacteria"/>
</dbReference>
<dbReference type="HOGENOM" id="CLU_144911_0_1_6"/>
<dbReference type="GO" id="GO:0005737">
    <property type="term" value="C:cytoplasm"/>
    <property type="evidence" value="ECO:0007669"/>
    <property type="project" value="UniProtKB-ARBA"/>
</dbReference>
<dbReference type="GO" id="GO:0015935">
    <property type="term" value="C:small ribosomal subunit"/>
    <property type="evidence" value="ECO:0007669"/>
    <property type="project" value="InterPro"/>
</dbReference>
<dbReference type="GO" id="GO:0019843">
    <property type="term" value="F:rRNA binding"/>
    <property type="evidence" value="ECO:0007669"/>
    <property type="project" value="UniProtKB-UniRule"/>
</dbReference>
<dbReference type="GO" id="GO:0003735">
    <property type="term" value="F:structural constituent of ribosome"/>
    <property type="evidence" value="ECO:0007669"/>
    <property type="project" value="InterPro"/>
</dbReference>
<dbReference type="GO" id="GO:0000028">
    <property type="term" value="P:ribosomal small subunit assembly"/>
    <property type="evidence" value="ECO:0007669"/>
    <property type="project" value="TreeGrafter"/>
</dbReference>
<dbReference type="GO" id="GO:0006412">
    <property type="term" value="P:translation"/>
    <property type="evidence" value="ECO:0007669"/>
    <property type="project" value="UniProtKB-UniRule"/>
</dbReference>
<dbReference type="FunFam" id="3.30.860.10:FF:000001">
    <property type="entry name" value="30S ribosomal protein S19"/>
    <property type="match status" value="1"/>
</dbReference>
<dbReference type="Gene3D" id="3.30.860.10">
    <property type="entry name" value="30s Ribosomal Protein S19, Chain A"/>
    <property type="match status" value="1"/>
</dbReference>
<dbReference type="HAMAP" id="MF_00531">
    <property type="entry name" value="Ribosomal_uS19"/>
    <property type="match status" value="1"/>
</dbReference>
<dbReference type="InterPro" id="IPR002222">
    <property type="entry name" value="Ribosomal_uS19"/>
</dbReference>
<dbReference type="InterPro" id="IPR005732">
    <property type="entry name" value="Ribosomal_uS19_bac-type"/>
</dbReference>
<dbReference type="InterPro" id="IPR020934">
    <property type="entry name" value="Ribosomal_uS19_CS"/>
</dbReference>
<dbReference type="InterPro" id="IPR023575">
    <property type="entry name" value="Ribosomal_uS19_SF"/>
</dbReference>
<dbReference type="NCBIfam" id="TIGR01050">
    <property type="entry name" value="rpsS_bact"/>
    <property type="match status" value="1"/>
</dbReference>
<dbReference type="PANTHER" id="PTHR11880">
    <property type="entry name" value="RIBOSOMAL PROTEIN S19P FAMILY MEMBER"/>
    <property type="match status" value="1"/>
</dbReference>
<dbReference type="PANTHER" id="PTHR11880:SF8">
    <property type="entry name" value="SMALL RIBOSOMAL SUBUNIT PROTEIN US19M"/>
    <property type="match status" value="1"/>
</dbReference>
<dbReference type="Pfam" id="PF00203">
    <property type="entry name" value="Ribosomal_S19"/>
    <property type="match status" value="1"/>
</dbReference>
<dbReference type="PIRSF" id="PIRSF002144">
    <property type="entry name" value="Ribosomal_S19"/>
    <property type="match status" value="1"/>
</dbReference>
<dbReference type="PRINTS" id="PR00975">
    <property type="entry name" value="RIBOSOMALS19"/>
</dbReference>
<dbReference type="SUPFAM" id="SSF54570">
    <property type="entry name" value="Ribosomal protein S19"/>
    <property type="match status" value="1"/>
</dbReference>
<dbReference type="PROSITE" id="PS00323">
    <property type="entry name" value="RIBOSOMAL_S19"/>
    <property type="match status" value="1"/>
</dbReference>
<organism>
    <name type="scientific">Psychrobacter sp. (strain PRwf-1)</name>
    <dbReference type="NCBI Taxonomy" id="349106"/>
    <lineage>
        <taxon>Bacteria</taxon>
        <taxon>Pseudomonadati</taxon>
        <taxon>Pseudomonadota</taxon>
        <taxon>Gammaproteobacteria</taxon>
        <taxon>Moraxellales</taxon>
        <taxon>Moraxellaceae</taxon>
        <taxon>Psychrobacter</taxon>
    </lineage>
</organism>
<feature type="chain" id="PRO_1000072512" description="Small ribosomal subunit protein uS19">
    <location>
        <begin position="1"/>
        <end position="91"/>
    </location>
</feature>
<accession>A5WCJ4</accession>
<name>RS19_PSYWF</name>
<comment type="function">
    <text evidence="1">Protein S19 forms a complex with S13 that binds strongly to the 16S ribosomal RNA.</text>
</comment>
<comment type="similarity">
    <text evidence="1">Belongs to the universal ribosomal protein uS19 family.</text>
</comment>
<protein>
    <recommendedName>
        <fullName evidence="1">Small ribosomal subunit protein uS19</fullName>
    </recommendedName>
    <alternativeName>
        <fullName evidence="2">30S ribosomal protein S19</fullName>
    </alternativeName>
</protein>
<proteinExistence type="inferred from homology"/>
<evidence type="ECO:0000255" key="1">
    <source>
        <dbReference type="HAMAP-Rule" id="MF_00531"/>
    </source>
</evidence>
<evidence type="ECO:0000305" key="2"/>
<gene>
    <name evidence="1" type="primary">rpsS</name>
    <name type="ordered locus">PsycPRwf_0430</name>
</gene>
<reference key="1">
    <citation type="submission" date="2007-05" db="EMBL/GenBank/DDBJ databases">
        <title>Complete sequence of chromosome of Psychrobacter sp. PRwf-1.</title>
        <authorList>
            <consortium name="US DOE Joint Genome Institute"/>
            <person name="Copeland A."/>
            <person name="Lucas S."/>
            <person name="Lapidus A."/>
            <person name="Barry K."/>
            <person name="Detter J.C."/>
            <person name="Glavina del Rio T."/>
            <person name="Hammon N."/>
            <person name="Israni S."/>
            <person name="Dalin E."/>
            <person name="Tice H."/>
            <person name="Pitluck S."/>
            <person name="Chain P."/>
            <person name="Malfatti S."/>
            <person name="Shin M."/>
            <person name="Vergez L."/>
            <person name="Schmutz J."/>
            <person name="Larimer F."/>
            <person name="Land M."/>
            <person name="Hauser L."/>
            <person name="Kyrpides N."/>
            <person name="Kim E."/>
            <person name="Tiedje J."/>
            <person name="Richardson P."/>
        </authorList>
    </citation>
    <scope>NUCLEOTIDE SEQUENCE [LARGE SCALE GENOMIC DNA]</scope>
    <source>
        <strain>PRwf-1</strain>
    </source>
</reference>
<sequence length="91" mass="10292">MPRSLKKGPFIDAHLFAKVEKAVESNSRKPIKTWSRRSMILPQMVGLTISVHNGRTHVPVIISEQMVGHKLGEFAPTRTYRGHGFDKKAKK</sequence>